<dbReference type="EMBL" id="BA000030">
    <property type="protein sequence ID" value="BAC72648.1"/>
    <property type="molecule type" value="Genomic_DNA"/>
</dbReference>
<dbReference type="RefSeq" id="WP_003998823.1">
    <property type="nucleotide sequence ID" value="NZ_JZJK01000077.1"/>
</dbReference>
<dbReference type="SMR" id="Q82DN5"/>
<dbReference type="GeneID" id="97449855"/>
<dbReference type="KEGG" id="sma:SAVERM_4936"/>
<dbReference type="eggNOG" id="COG0093">
    <property type="taxonomic scope" value="Bacteria"/>
</dbReference>
<dbReference type="HOGENOM" id="CLU_095071_2_1_11"/>
<dbReference type="OrthoDB" id="9806379at2"/>
<dbReference type="Proteomes" id="UP000000428">
    <property type="component" value="Chromosome"/>
</dbReference>
<dbReference type="GO" id="GO:0022625">
    <property type="term" value="C:cytosolic large ribosomal subunit"/>
    <property type="evidence" value="ECO:0007669"/>
    <property type="project" value="TreeGrafter"/>
</dbReference>
<dbReference type="GO" id="GO:0070180">
    <property type="term" value="F:large ribosomal subunit rRNA binding"/>
    <property type="evidence" value="ECO:0007669"/>
    <property type="project" value="TreeGrafter"/>
</dbReference>
<dbReference type="GO" id="GO:0003735">
    <property type="term" value="F:structural constituent of ribosome"/>
    <property type="evidence" value="ECO:0007669"/>
    <property type="project" value="InterPro"/>
</dbReference>
<dbReference type="GO" id="GO:0006412">
    <property type="term" value="P:translation"/>
    <property type="evidence" value="ECO:0007669"/>
    <property type="project" value="UniProtKB-UniRule"/>
</dbReference>
<dbReference type="CDD" id="cd00337">
    <property type="entry name" value="Ribosomal_uL14"/>
    <property type="match status" value="1"/>
</dbReference>
<dbReference type="FunFam" id="2.40.150.20:FF:000001">
    <property type="entry name" value="50S ribosomal protein L14"/>
    <property type="match status" value="1"/>
</dbReference>
<dbReference type="Gene3D" id="2.40.150.20">
    <property type="entry name" value="Ribosomal protein L14"/>
    <property type="match status" value="1"/>
</dbReference>
<dbReference type="HAMAP" id="MF_01367">
    <property type="entry name" value="Ribosomal_uL14"/>
    <property type="match status" value="1"/>
</dbReference>
<dbReference type="InterPro" id="IPR000218">
    <property type="entry name" value="Ribosomal_uL14"/>
</dbReference>
<dbReference type="InterPro" id="IPR005745">
    <property type="entry name" value="Ribosomal_uL14_bac-type"/>
</dbReference>
<dbReference type="InterPro" id="IPR019972">
    <property type="entry name" value="Ribosomal_uL14_CS"/>
</dbReference>
<dbReference type="InterPro" id="IPR036853">
    <property type="entry name" value="Ribosomal_uL14_sf"/>
</dbReference>
<dbReference type="NCBIfam" id="TIGR01067">
    <property type="entry name" value="rplN_bact"/>
    <property type="match status" value="1"/>
</dbReference>
<dbReference type="PANTHER" id="PTHR11761">
    <property type="entry name" value="50S/60S RIBOSOMAL PROTEIN L14/L23"/>
    <property type="match status" value="1"/>
</dbReference>
<dbReference type="PANTHER" id="PTHR11761:SF3">
    <property type="entry name" value="LARGE RIBOSOMAL SUBUNIT PROTEIN UL14M"/>
    <property type="match status" value="1"/>
</dbReference>
<dbReference type="Pfam" id="PF00238">
    <property type="entry name" value="Ribosomal_L14"/>
    <property type="match status" value="1"/>
</dbReference>
<dbReference type="SMART" id="SM01374">
    <property type="entry name" value="Ribosomal_L14"/>
    <property type="match status" value="1"/>
</dbReference>
<dbReference type="SUPFAM" id="SSF50193">
    <property type="entry name" value="Ribosomal protein L14"/>
    <property type="match status" value="1"/>
</dbReference>
<dbReference type="PROSITE" id="PS00049">
    <property type="entry name" value="RIBOSOMAL_L14"/>
    <property type="match status" value="1"/>
</dbReference>
<gene>
    <name evidence="1" type="primary">rplN</name>
    <name type="ordered locus">SAV_4936</name>
</gene>
<proteinExistence type="inferred from homology"/>
<accession>Q82DN5</accession>
<keyword id="KW-1185">Reference proteome</keyword>
<keyword id="KW-0687">Ribonucleoprotein</keyword>
<keyword id="KW-0689">Ribosomal protein</keyword>
<keyword id="KW-0694">RNA-binding</keyword>
<keyword id="KW-0699">rRNA-binding</keyword>
<feature type="chain" id="PRO_0000266567" description="Large ribosomal subunit protein uL14">
    <location>
        <begin position="1"/>
        <end position="122"/>
    </location>
</feature>
<sequence>MIQQESRLRVADNTGAKEILCIRVLGGSGRRYAGIGDVIVATVKDAIPGGNVKKGDVVKAVIVRTVKERRRPDGSYIRFDENAAVILKNDGDPRGTRIFGPVGRELREKKFMKIISLAPEVL</sequence>
<protein>
    <recommendedName>
        <fullName evidence="1">Large ribosomal subunit protein uL14</fullName>
    </recommendedName>
    <alternativeName>
        <fullName evidence="2">50S ribosomal protein L14</fullName>
    </alternativeName>
</protein>
<reference key="1">
    <citation type="journal article" date="2001" name="Proc. Natl. Acad. Sci. U.S.A.">
        <title>Genome sequence of an industrial microorganism Streptomyces avermitilis: deducing the ability of producing secondary metabolites.</title>
        <authorList>
            <person name="Omura S."/>
            <person name="Ikeda H."/>
            <person name="Ishikawa J."/>
            <person name="Hanamoto A."/>
            <person name="Takahashi C."/>
            <person name="Shinose M."/>
            <person name="Takahashi Y."/>
            <person name="Horikawa H."/>
            <person name="Nakazawa H."/>
            <person name="Osonoe T."/>
            <person name="Kikuchi H."/>
            <person name="Shiba T."/>
            <person name="Sakaki Y."/>
            <person name="Hattori M."/>
        </authorList>
    </citation>
    <scope>NUCLEOTIDE SEQUENCE [LARGE SCALE GENOMIC DNA]</scope>
    <source>
        <strain>ATCC 31267 / DSM 46492 / JCM 5070 / NBRC 14893 / NCIMB 12804 / NRRL 8165 / MA-4680</strain>
    </source>
</reference>
<reference key="2">
    <citation type="journal article" date="2003" name="Nat. Biotechnol.">
        <title>Complete genome sequence and comparative analysis of the industrial microorganism Streptomyces avermitilis.</title>
        <authorList>
            <person name="Ikeda H."/>
            <person name="Ishikawa J."/>
            <person name="Hanamoto A."/>
            <person name="Shinose M."/>
            <person name="Kikuchi H."/>
            <person name="Shiba T."/>
            <person name="Sakaki Y."/>
            <person name="Hattori M."/>
            <person name="Omura S."/>
        </authorList>
    </citation>
    <scope>NUCLEOTIDE SEQUENCE [LARGE SCALE GENOMIC DNA]</scope>
    <source>
        <strain>ATCC 31267 / DSM 46492 / JCM 5070 / NBRC 14893 / NCIMB 12804 / NRRL 8165 / MA-4680</strain>
    </source>
</reference>
<evidence type="ECO:0000255" key="1">
    <source>
        <dbReference type="HAMAP-Rule" id="MF_01367"/>
    </source>
</evidence>
<evidence type="ECO:0000305" key="2"/>
<name>RL14_STRAW</name>
<comment type="function">
    <text evidence="1">Binds to 23S rRNA. Forms part of two intersubunit bridges in the 70S ribosome.</text>
</comment>
<comment type="subunit">
    <text evidence="1">Part of the 50S ribosomal subunit. Forms a cluster with proteins L3 and L19. In the 70S ribosome, L14 and L19 interact and together make contacts with the 16S rRNA in bridges B5 and B8.</text>
</comment>
<comment type="similarity">
    <text evidence="1">Belongs to the universal ribosomal protein uL14 family.</text>
</comment>
<organism>
    <name type="scientific">Streptomyces avermitilis (strain ATCC 31267 / DSM 46492 / JCM 5070 / NBRC 14893 / NCIMB 12804 / NRRL 8165 / MA-4680)</name>
    <dbReference type="NCBI Taxonomy" id="227882"/>
    <lineage>
        <taxon>Bacteria</taxon>
        <taxon>Bacillati</taxon>
        <taxon>Actinomycetota</taxon>
        <taxon>Actinomycetes</taxon>
        <taxon>Kitasatosporales</taxon>
        <taxon>Streptomycetaceae</taxon>
        <taxon>Streptomyces</taxon>
    </lineage>
</organism>